<organism>
    <name type="scientific">Cupriavidus pinatubonensis (strain JMP 134 / LMG 1197)</name>
    <name type="common">Cupriavidus necator (strain JMP 134)</name>
    <dbReference type="NCBI Taxonomy" id="264198"/>
    <lineage>
        <taxon>Bacteria</taxon>
        <taxon>Pseudomonadati</taxon>
        <taxon>Pseudomonadota</taxon>
        <taxon>Betaproteobacteria</taxon>
        <taxon>Burkholderiales</taxon>
        <taxon>Burkholderiaceae</taxon>
        <taxon>Cupriavidus</taxon>
    </lineage>
</organism>
<evidence type="ECO:0000255" key="1">
    <source>
        <dbReference type="HAMAP-Rule" id="MF_01216"/>
    </source>
</evidence>
<protein>
    <recommendedName>
        <fullName evidence="1">FMN-dependent NADH:quinone oxidoreductase 2</fullName>
        <ecNumber evidence="1">1.6.5.-</ecNumber>
    </recommendedName>
    <alternativeName>
        <fullName evidence="1">Azo-dye reductase 2</fullName>
    </alternativeName>
    <alternativeName>
        <fullName evidence="1">FMN-dependent NADH-azo compound oxidoreductase 2</fullName>
    </alternativeName>
    <alternativeName>
        <fullName evidence="1">FMN-dependent NADH-azoreductase 2</fullName>
        <ecNumber evidence="1">1.7.1.17</ecNumber>
    </alternativeName>
</protein>
<name>AZOR2_CUPPJ</name>
<dbReference type="EC" id="1.6.5.-" evidence="1"/>
<dbReference type="EC" id="1.7.1.17" evidence="1"/>
<dbReference type="EMBL" id="CP000090">
    <property type="protein sequence ID" value="AAZ62632.1"/>
    <property type="molecule type" value="Genomic_DNA"/>
</dbReference>
<dbReference type="SMR" id="Q46W52"/>
<dbReference type="STRING" id="264198.Reut_A3273"/>
<dbReference type="KEGG" id="reu:Reut_A3273"/>
<dbReference type="eggNOG" id="COG1182">
    <property type="taxonomic scope" value="Bacteria"/>
</dbReference>
<dbReference type="HOGENOM" id="CLU_088964_0_2_4"/>
<dbReference type="OrthoDB" id="9787136at2"/>
<dbReference type="GO" id="GO:0009055">
    <property type="term" value="F:electron transfer activity"/>
    <property type="evidence" value="ECO:0007669"/>
    <property type="project" value="UniProtKB-UniRule"/>
</dbReference>
<dbReference type="GO" id="GO:0010181">
    <property type="term" value="F:FMN binding"/>
    <property type="evidence" value="ECO:0007669"/>
    <property type="project" value="UniProtKB-UniRule"/>
</dbReference>
<dbReference type="GO" id="GO:0016652">
    <property type="term" value="F:oxidoreductase activity, acting on NAD(P)H as acceptor"/>
    <property type="evidence" value="ECO:0007669"/>
    <property type="project" value="UniProtKB-UniRule"/>
</dbReference>
<dbReference type="GO" id="GO:0016655">
    <property type="term" value="F:oxidoreductase activity, acting on NAD(P)H, quinone or similar compound as acceptor"/>
    <property type="evidence" value="ECO:0007669"/>
    <property type="project" value="InterPro"/>
</dbReference>
<dbReference type="Gene3D" id="3.40.50.360">
    <property type="match status" value="1"/>
</dbReference>
<dbReference type="HAMAP" id="MF_01216">
    <property type="entry name" value="Azoreductase_type1"/>
    <property type="match status" value="1"/>
</dbReference>
<dbReference type="InterPro" id="IPR003680">
    <property type="entry name" value="Flavodoxin_fold"/>
</dbReference>
<dbReference type="InterPro" id="IPR029039">
    <property type="entry name" value="Flavoprotein-like_sf"/>
</dbReference>
<dbReference type="InterPro" id="IPR050104">
    <property type="entry name" value="FMN-dep_NADH:Q_OxRdtase_AzoR1"/>
</dbReference>
<dbReference type="InterPro" id="IPR023048">
    <property type="entry name" value="NADH:quinone_OxRdtase_FMN_depd"/>
</dbReference>
<dbReference type="PANTHER" id="PTHR43741">
    <property type="entry name" value="FMN-DEPENDENT NADH-AZOREDUCTASE 1"/>
    <property type="match status" value="1"/>
</dbReference>
<dbReference type="PANTHER" id="PTHR43741:SF4">
    <property type="entry name" value="FMN-DEPENDENT NADH:QUINONE OXIDOREDUCTASE"/>
    <property type="match status" value="1"/>
</dbReference>
<dbReference type="Pfam" id="PF02525">
    <property type="entry name" value="Flavodoxin_2"/>
    <property type="match status" value="1"/>
</dbReference>
<dbReference type="SUPFAM" id="SSF52218">
    <property type="entry name" value="Flavoproteins"/>
    <property type="match status" value="1"/>
</dbReference>
<feature type="chain" id="PRO_0000245959" description="FMN-dependent NADH:quinone oxidoreductase 2">
    <location>
        <begin position="1"/>
        <end position="206"/>
    </location>
</feature>
<feature type="binding site" evidence="1">
    <location>
        <position position="10"/>
    </location>
    <ligand>
        <name>FMN</name>
        <dbReference type="ChEBI" id="CHEBI:58210"/>
    </ligand>
</feature>
<feature type="binding site" evidence="1">
    <location>
        <begin position="16"/>
        <end position="18"/>
    </location>
    <ligand>
        <name>FMN</name>
        <dbReference type="ChEBI" id="CHEBI:58210"/>
    </ligand>
</feature>
<feature type="binding site" evidence="1">
    <location>
        <begin position="140"/>
        <end position="143"/>
    </location>
    <ligand>
        <name>FMN</name>
        <dbReference type="ChEBI" id="CHEBI:58210"/>
    </ligand>
</feature>
<keyword id="KW-0285">Flavoprotein</keyword>
<keyword id="KW-0288">FMN</keyword>
<keyword id="KW-0520">NAD</keyword>
<keyword id="KW-0560">Oxidoreductase</keyword>
<sequence>MPKLLYLSVSPRAENSYSRQAGARMIAWLERRHGPLTVIDRDLAADPVPHIDGAMARASLMPAADRGPAEHAALALSETLIGELEAADIVLISTPMHNFTVPSALKAWIDHVVRSNRTFRSTPAGKVGLLADRPVLAVVSCGGPFHDGPGSQRDMMTPYLQYVFGSVGITQVEVVRMENMARGEDFVARGFERLNAWTGSLAIRAA</sequence>
<proteinExistence type="inferred from homology"/>
<comment type="function">
    <text evidence="1">Quinone reductase that provides resistance to thiol-specific stress caused by electrophilic quinones.</text>
</comment>
<comment type="function">
    <text evidence="1">Also exhibits azoreductase activity. Catalyzes the reductive cleavage of the azo bond in aromatic azo compounds to the corresponding amines.</text>
</comment>
<comment type="catalytic activity">
    <reaction evidence="1">
        <text>2 a quinone + NADH + H(+) = 2 a 1,4-benzosemiquinone + NAD(+)</text>
        <dbReference type="Rhea" id="RHEA:65952"/>
        <dbReference type="ChEBI" id="CHEBI:15378"/>
        <dbReference type="ChEBI" id="CHEBI:57540"/>
        <dbReference type="ChEBI" id="CHEBI:57945"/>
        <dbReference type="ChEBI" id="CHEBI:132124"/>
        <dbReference type="ChEBI" id="CHEBI:134225"/>
    </reaction>
</comment>
<comment type="catalytic activity">
    <reaction evidence="1">
        <text>N,N-dimethyl-1,4-phenylenediamine + anthranilate + 2 NAD(+) = 2-(4-dimethylaminophenyl)diazenylbenzoate + 2 NADH + 2 H(+)</text>
        <dbReference type="Rhea" id="RHEA:55872"/>
        <dbReference type="ChEBI" id="CHEBI:15378"/>
        <dbReference type="ChEBI" id="CHEBI:15783"/>
        <dbReference type="ChEBI" id="CHEBI:16567"/>
        <dbReference type="ChEBI" id="CHEBI:57540"/>
        <dbReference type="ChEBI" id="CHEBI:57945"/>
        <dbReference type="ChEBI" id="CHEBI:71579"/>
        <dbReference type="EC" id="1.7.1.17"/>
    </reaction>
</comment>
<comment type="cofactor">
    <cofactor evidence="1">
        <name>FMN</name>
        <dbReference type="ChEBI" id="CHEBI:58210"/>
    </cofactor>
    <text evidence="1">Binds 1 FMN per subunit.</text>
</comment>
<comment type="subunit">
    <text evidence="1">Homodimer.</text>
</comment>
<comment type="similarity">
    <text evidence="1">Belongs to the azoreductase type 1 family.</text>
</comment>
<reference key="1">
    <citation type="journal article" date="2010" name="PLoS ONE">
        <title>The complete multipartite genome sequence of Cupriavidus necator JMP134, a versatile pollutant degrader.</title>
        <authorList>
            <person name="Lykidis A."/>
            <person name="Perez-Pantoja D."/>
            <person name="Ledger T."/>
            <person name="Mavromatis K."/>
            <person name="Anderson I.J."/>
            <person name="Ivanova N.N."/>
            <person name="Hooper S.D."/>
            <person name="Lapidus A."/>
            <person name="Lucas S."/>
            <person name="Gonzalez B."/>
            <person name="Kyrpides N.C."/>
        </authorList>
    </citation>
    <scope>NUCLEOTIDE SEQUENCE [LARGE SCALE GENOMIC DNA]</scope>
    <source>
        <strain>JMP134 / LMG 1197</strain>
    </source>
</reference>
<accession>Q46W52</accession>
<gene>
    <name evidence="1" type="primary">azoR2</name>
    <name type="ordered locus">Reut_A3273</name>
</gene>